<dbReference type="EMBL" id="Z97344">
    <property type="protein sequence ID" value="CAB10558.1"/>
    <property type="status" value="ALT_SEQ"/>
    <property type="molecule type" value="Genomic_DNA"/>
</dbReference>
<dbReference type="EMBL" id="AL161547">
    <property type="protein sequence ID" value="CAB78781.1"/>
    <property type="status" value="ALT_SEQ"/>
    <property type="molecule type" value="Genomic_DNA"/>
</dbReference>
<dbReference type="EMBL" id="CP002687">
    <property type="protein sequence ID" value="AEE83949.1"/>
    <property type="molecule type" value="Genomic_DNA"/>
</dbReference>
<dbReference type="PIR" id="A71448">
    <property type="entry name" value="A71448"/>
</dbReference>
<dbReference type="RefSeq" id="NP_567539.2">
    <property type="nucleotide sequence ID" value="NM_117887.2"/>
</dbReference>
<dbReference type="SMR" id="Q3E9Z8"/>
<dbReference type="BioGRID" id="12792">
    <property type="interactions" value="2"/>
</dbReference>
<dbReference type="FunCoup" id="Q3E9Z8">
    <property type="interactions" value="3"/>
</dbReference>
<dbReference type="STRING" id="3702.Q3E9Z8"/>
<dbReference type="PaxDb" id="3702-AT4G17780.1"/>
<dbReference type="EnsemblPlants" id="AT4G17780.1">
    <property type="protein sequence ID" value="AT4G17780.1"/>
    <property type="gene ID" value="AT4G17780"/>
</dbReference>
<dbReference type="GeneID" id="827499"/>
<dbReference type="Gramene" id="AT4G17780.1">
    <property type="protein sequence ID" value="AT4G17780.1"/>
    <property type="gene ID" value="AT4G17780"/>
</dbReference>
<dbReference type="KEGG" id="ath:AT4G17780"/>
<dbReference type="Araport" id="AT4G17780"/>
<dbReference type="TAIR" id="AT4G17780"/>
<dbReference type="HOGENOM" id="CLU_027176_4_1_1"/>
<dbReference type="InParanoid" id="Q3E9Z8"/>
<dbReference type="OMA" id="FVERRMS"/>
<dbReference type="PRO" id="PR:Q3E9Z8"/>
<dbReference type="Proteomes" id="UP000006548">
    <property type="component" value="Chromosome 4"/>
</dbReference>
<dbReference type="ExpressionAtlas" id="Q3E9Z8">
    <property type="expression patterns" value="baseline and differential"/>
</dbReference>
<dbReference type="InterPro" id="IPR013187">
    <property type="entry name" value="F-box-assoc_dom_typ3"/>
</dbReference>
<dbReference type="InterPro" id="IPR017451">
    <property type="entry name" value="F-box-assoc_interact_dom"/>
</dbReference>
<dbReference type="InterPro" id="IPR036047">
    <property type="entry name" value="F-box-like_dom_sf"/>
</dbReference>
<dbReference type="InterPro" id="IPR001810">
    <property type="entry name" value="F-box_dom"/>
</dbReference>
<dbReference type="InterPro" id="IPR015915">
    <property type="entry name" value="Kelch-typ_b-propeller"/>
</dbReference>
<dbReference type="InterPro" id="IPR050796">
    <property type="entry name" value="SCF_F-box_component"/>
</dbReference>
<dbReference type="NCBIfam" id="TIGR01640">
    <property type="entry name" value="F_box_assoc_1"/>
    <property type="match status" value="1"/>
</dbReference>
<dbReference type="PANTHER" id="PTHR31672">
    <property type="entry name" value="BNACNNG10540D PROTEIN"/>
    <property type="match status" value="1"/>
</dbReference>
<dbReference type="PANTHER" id="PTHR31672:SF13">
    <property type="entry name" value="F-BOX PROTEIN CPR30-LIKE"/>
    <property type="match status" value="1"/>
</dbReference>
<dbReference type="Pfam" id="PF00646">
    <property type="entry name" value="F-box"/>
    <property type="match status" value="1"/>
</dbReference>
<dbReference type="Pfam" id="PF08268">
    <property type="entry name" value="FBA_3"/>
    <property type="match status" value="1"/>
</dbReference>
<dbReference type="SMART" id="SM00256">
    <property type="entry name" value="FBOX"/>
    <property type="match status" value="1"/>
</dbReference>
<dbReference type="SUPFAM" id="SSF81383">
    <property type="entry name" value="F-box domain"/>
    <property type="match status" value="1"/>
</dbReference>
<dbReference type="SUPFAM" id="SSF117281">
    <property type="entry name" value="Kelch motif"/>
    <property type="match status" value="1"/>
</dbReference>
<keyword id="KW-1185">Reference proteome</keyword>
<feature type="chain" id="PRO_0000274954" description="Putative F-box protein At4g17780">
    <location>
        <begin position="1"/>
        <end position="398"/>
    </location>
</feature>
<feature type="domain" description="F-box">
    <location>
        <begin position="8"/>
        <end position="55"/>
    </location>
</feature>
<proteinExistence type="predicted"/>
<gene>
    <name type="ordered locus">At4g17780</name>
    <name type="ORF">dl4925c</name>
</gene>
<accession>Q3E9Z8</accession>
<accession>F4JPZ2</accession>
<accession>O23618</accession>
<sequence length="398" mass="45985">MEEEEKNPSSIYIVADLLEDIFLRLPLKSILISKSVSKRWRSILESKTFVERRMSLQKKRKILAAYNCKCGWEPRLLPGSSQCKGNEEIVYLHCNAAQPSFTCDGLVCILEPRWIDVLNPWTRQLRRYGFGFGTIFGVGSAFSPRHWAMGFGKDKVTGSYKVVKMCLISFSEICARDPEVEYSVLDVETGEWRMLSPPPYKVFEVRKSECANGSIYWLHKPTERAWTILALDLHKEELHNISVPDMSVTQETFQIVNLEDRLAIANTYTKTEWKLEIWSMDTEVETWTKTYSIDLENRVASRERRNRWFTPVSVSKQGNIVFYDNHKRLFKYYPRKNEILYLSADTCVISPFFENLAPLPQKSTLHTPIIAGEPNAPLTTLVVVGSIWSPLFLFSVKL</sequence>
<evidence type="ECO:0000305" key="1"/>
<organism>
    <name type="scientific">Arabidopsis thaliana</name>
    <name type="common">Mouse-ear cress</name>
    <dbReference type="NCBI Taxonomy" id="3702"/>
    <lineage>
        <taxon>Eukaryota</taxon>
        <taxon>Viridiplantae</taxon>
        <taxon>Streptophyta</taxon>
        <taxon>Embryophyta</taxon>
        <taxon>Tracheophyta</taxon>
        <taxon>Spermatophyta</taxon>
        <taxon>Magnoliopsida</taxon>
        <taxon>eudicotyledons</taxon>
        <taxon>Gunneridae</taxon>
        <taxon>Pentapetalae</taxon>
        <taxon>rosids</taxon>
        <taxon>malvids</taxon>
        <taxon>Brassicales</taxon>
        <taxon>Brassicaceae</taxon>
        <taxon>Camelineae</taxon>
        <taxon>Arabidopsis</taxon>
    </lineage>
</organism>
<reference key="1">
    <citation type="journal article" date="1998" name="Nature">
        <title>Analysis of 1.9 Mb of contiguous sequence from chromosome 4 of Arabidopsis thaliana.</title>
        <authorList>
            <person name="Bevan M."/>
            <person name="Bancroft I."/>
            <person name="Bent E."/>
            <person name="Love K."/>
            <person name="Goodman H.M."/>
            <person name="Dean C."/>
            <person name="Bergkamp R."/>
            <person name="Dirkse W."/>
            <person name="van Staveren M."/>
            <person name="Stiekema W."/>
            <person name="Drost L."/>
            <person name="Ridley P."/>
            <person name="Hudson S.-A."/>
            <person name="Patel K."/>
            <person name="Murphy G."/>
            <person name="Piffanelli P."/>
            <person name="Wedler H."/>
            <person name="Wedler E."/>
            <person name="Wambutt R."/>
            <person name="Weitzenegger T."/>
            <person name="Pohl T."/>
            <person name="Terryn N."/>
            <person name="Gielen J."/>
            <person name="Villarroel R."/>
            <person name="De Clercq R."/>
            <person name="van Montagu M."/>
            <person name="Lecharny A."/>
            <person name="Aubourg S."/>
            <person name="Gy I."/>
            <person name="Kreis M."/>
            <person name="Lao N."/>
            <person name="Kavanagh T."/>
            <person name="Hempel S."/>
            <person name="Kotter P."/>
            <person name="Entian K.-D."/>
            <person name="Rieger M."/>
            <person name="Schaefer M."/>
            <person name="Funk B."/>
            <person name="Mueller-Auer S."/>
            <person name="Silvey M."/>
            <person name="James R."/>
            <person name="Monfort A."/>
            <person name="Pons A."/>
            <person name="Puigdomenech P."/>
            <person name="Douka A."/>
            <person name="Voukelatou E."/>
            <person name="Milioni D."/>
            <person name="Hatzopoulos P."/>
            <person name="Piravandi E."/>
            <person name="Obermaier B."/>
            <person name="Hilbert H."/>
            <person name="Duesterhoeft A."/>
            <person name="Moores T."/>
            <person name="Jones J.D.G."/>
            <person name="Eneva T."/>
            <person name="Palme K."/>
            <person name="Benes V."/>
            <person name="Rechmann S."/>
            <person name="Ansorge W."/>
            <person name="Cooke R."/>
            <person name="Berger C."/>
            <person name="Delseny M."/>
            <person name="Voet M."/>
            <person name="Volckaert G."/>
            <person name="Mewes H.-W."/>
            <person name="Klosterman S."/>
            <person name="Schueller C."/>
            <person name="Chalwatzis N."/>
        </authorList>
    </citation>
    <scope>NUCLEOTIDE SEQUENCE [LARGE SCALE GENOMIC DNA]</scope>
    <source>
        <strain>cv. Columbia</strain>
    </source>
</reference>
<reference key="2">
    <citation type="journal article" date="1999" name="Nature">
        <title>Sequence and analysis of chromosome 4 of the plant Arabidopsis thaliana.</title>
        <authorList>
            <person name="Mayer K.F.X."/>
            <person name="Schueller C."/>
            <person name="Wambutt R."/>
            <person name="Murphy G."/>
            <person name="Volckaert G."/>
            <person name="Pohl T."/>
            <person name="Duesterhoeft A."/>
            <person name="Stiekema W."/>
            <person name="Entian K.-D."/>
            <person name="Terryn N."/>
            <person name="Harris B."/>
            <person name="Ansorge W."/>
            <person name="Brandt P."/>
            <person name="Grivell L.A."/>
            <person name="Rieger M."/>
            <person name="Weichselgartner M."/>
            <person name="de Simone V."/>
            <person name="Obermaier B."/>
            <person name="Mache R."/>
            <person name="Mueller M."/>
            <person name="Kreis M."/>
            <person name="Delseny M."/>
            <person name="Puigdomenech P."/>
            <person name="Watson M."/>
            <person name="Schmidtheini T."/>
            <person name="Reichert B."/>
            <person name="Portetelle D."/>
            <person name="Perez-Alonso M."/>
            <person name="Boutry M."/>
            <person name="Bancroft I."/>
            <person name="Vos P."/>
            <person name="Hoheisel J."/>
            <person name="Zimmermann W."/>
            <person name="Wedler H."/>
            <person name="Ridley P."/>
            <person name="Langham S.-A."/>
            <person name="McCullagh B."/>
            <person name="Bilham L."/>
            <person name="Robben J."/>
            <person name="van der Schueren J."/>
            <person name="Grymonprez B."/>
            <person name="Chuang Y.-J."/>
            <person name="Vandenbussche F."/>
            <person name="Braeken M."/>
            <person name="Weltjens I."/>
            <person name="Voet M."/>
            <person name="Bastiaens I."/>
            <person name="Aert R."/>
            <person name="Defoor E."/>
            <person name="Weitzenegger T."/>
            <person name="Bothe G."/>
            <person name="Ramsperger U."/>
            <person name="Hilbert H."/>
            <person name="Braun M."/>
            <person name="Holzer E."/>
            <person name="Brandt A."/>
            <person name="Peters S."/>
            <person name="van Staveren M."/>
            <person name="Dirkse W."/>
            <person name="Mooijman P."/>
            <person name="Klein Lankhorst R."/>
            <person name="Rose M."/>
            <person name="Hauf J."/>
            <person name="Koetter P."/>
            <person name="Berneiser S."/>
            <person name="Hempel S."/>
            <person name="Feldpausch M."/>
            <person name="Lamberth S."/>
            <person name="Van den Daele H."/>
            <person name="De Keyser A."/>
            <person name="Buysshaert C."/>
            <person name="Gielen J."/>
            <person name="Villarroel R."/>
            <person name="De Clercq R."/>
            <person name="van Montagu M."/>
            <person name="Rogers J."/>
            <person name="Cronin A."/>
            <person name="Quail M.A."/>
            <person name="Bray-Allen S."/>
            <person name="Clark L."/>
            <person name="Doggett J."/>
            <person name="Hall S."/>
            <person name="Kay M."/>
            <person name="Lennard N."/>
            <person name="McLay K."/>
            <person name="Mayes R."/>
            <person name="Pettett A."/>
            <person name="Rajandream M.A."/>
            <person name="Lyne M."/>
            <person name="Benes V."/>
            <person name="Rechmann S."/>
            <person name="Borkova D."/>
            <person name="Bloecker H."/>
            <person name="Scharfe M."/>
            <person name="Grimm M."/>
            <person name="Loehnert T.-H."/>
            <person name="Dose S."/>
            <person name="de Haan M."/>
            <person name="Maarse A.C."/>
            <person name="Schaefer M."/>
            <person name="Mueller-Auer S."/>
            <person name="Gabel C."/>
            <person name="Fuchs M."/>
            <person name="Fartmann B."/>
            <person name="Granderath K."/>
            <person name="Dauner D."/>
            <person name="Herzl A."/>
            <person name="Neumann S."/>
            <person name="Argiriou A."/>
            <person name="Vitale D."/>
            <person name="Liguori R."/>
            <person name="Piravandi E."/>
            <person name="Massenet O."/>
            <person name="Quigley F."/>
            <person name="Clabauld G."/>
            <person name="Muendlein A."/>
            <person name="Felber R."/>
            <person name="Schnabl S."/>
            <person name="Hiller R."/>
            <person name="Schmidt W."/>
            <person name="Lecharny A."/>
            <person name="Aubourg S."/>
            <person name="Chefdor F."/>
            <person name="Cooke R."/>
            <person name="Berger C."/>
            <person name="Monfort A."/>
            <person name="Casacuberta E."/>
            <person name="Gibbons T."/>
            <person name="Weber N."/>
            <person name="Vandenbol M."/>
            <person name="Bargues M."/>
            <person name="Terol J."/>
            <person name="Torres A."/>
            <person name="Perez-Perez A."/>
            <person name="Purnelle B."/>
            <person name="Bent E."/>
            <person name="Johnson S."/>
            <person name="Tacon D."/>
            <person name="Jesse T."/>
            <person name="Heijnen L."/>
            <person name="Schwarz S."/>
            <person name="Scholler P."/>
            <person name="Heber S."/>
            <person name="Francs P."/>
            <person name="Bielke C."/>
            <person name="Frishman D."/>
            <person name="Haase D."/>
            <person name="Lemcke K."/>
            <person name="Mewes H.-W."/>
            <person name="Stocker S."/>
            <person name="Zaccaria P."/>
            <person name="Bevan M."/>
            <person name="Wilson R.K."/>
            <person name="de la Bastide M."/>
            <person name="Habermann K."/>
            <person name="Parnell L."/>
            <person name="Dedhia N."/>
            <person name="Gnoj L."/>
            <person name="Schutz K."/>
            <person name="Huang E."/>
            <person name="Spiegel L."/>
            <person name="Sekhon M."/>
            <person name="Murray J."/>
            <person name="Sheet P."/>
            <person name="Cordes M."/>
            <person name="Abu-Threideh J."/>
            <person name="Stoneking T."/>
            <person name="Kalicki J."/>
            <person name="Graves T."/>
            <person name="Harmon G."/>
            <person name="Edwards J."/>
            <person name="Latreille P."/>
            <person name="Courtney L."/>
            <person name="Cloud J."/>
            <person name="Abbott A."/>
            <person name="Scott K."/>
            <person name="Johnson D."/>
            <person name="Minx P."/>
            <person name="Bentley D."/>
            <person name="Fulton B."/>
            <person name="Miller N."/>
            <person name="Greco T."/>
            <person name="Kemp K."/>
            <person name="Kramer J."/>
            <person name="Fulton L."/>
            <person name="Mardis E."/>
            <person name="Dante M."/>
            <person name="Pepin K."/>
            <person name="Hillier L.W."/>
            <person name="Nelson J."/>
            <person name="Spieth J."/>
            <person name="Ryan E."/>
            <person name="Andrews S."/>
            <person name="Geisel C."/>
            <person name="Layman D."/>
            <person name="Du H."/>
            <person name="Ali J."/>
            <person name="Berghoff A."/>
            <person name="Jones K."/>
            <person name="Drone K."/>
            <person name="Cotton M."/>
            <person name="Joshu C."/>
            <person name="Antonoiu B."/>
            <person name="Zidanic M."/>
            <person name="Strong C."/>
            <person name="Sun H."/>
            <person name="Lamar B."/>
            <person name="Yordan C."/>
            <person name="Ma P."/>
            <person name="Zhong J."/>
            <person name="Preston R."/>
            <person name="Vil D."/>
            <person name="Shekher M."/>
            <person name="Matero A."/>
            <person name="Shah R."/>
            <person name="Swaby I.K."/>
            <person name="O'Shaughnessy A."/>
            <person name="Rodriguez M."/>
            <person name="Hoffman J."/>
            <person name="Till S."/>
            <person name="Granat S."/>
            <person name="Shohdy N."/>
            <person name="Hasegawa A."/>
            <person name="Hameed A."/>
            <person name="Lodhi M."/>
            <person name="Johnson A."/>
            <person name="Chen E."/>
            <person name="Marra M.A."/>
            <person name="Martienssen R."/>
            <person name="McCombie W.R."/>
        </authorList>
    </citation>
    <scope>NUCLEOTIDE SEQUENCE [LARGE SCALE GENOMIC DNA]</scope>
    <source>
        <strain>cv. Columbia</strain>
    </source>
</reference>
<reference key="3">
    <citation type="journal article" date="2017" name="Plant J.">
        <title>Araport11: a complete reannotation of the Arabidopsis thaliana reference genome.</title>
        <authorList>
            <person name="Cheng C.Y."/>
            <person name="Krishnakumar V."/>
            <person name="Chan A.P."/>
            <person name="Thibaud-Nissen F."/>
            <person name="Schobel S."/>
            <person name="Town C.D."/>
        </authorList>
    </citation>
    <scope>GENOME REANNOTATION</scope>
    <source>
        <strain>cv. Columbia</strain>
    </source>
</reference>
<comment type="sequence caution" evidence="1">
    <conflict type="erroneous gene model prediction">
        <sequence resource="EMBL-CDS" id="CAB10558"/>
    </conflict>
    <text>The predicted gene At4g17780 has been split into 2 genes: At4g17780 and At4g17785.</text>
</comment>
<comment type="sequence caution" evidence="1">
    <conflict type="erroneous gene model prediction">
        <sequence resource="EMBL-CDS" id="CAB78781"/>
    </conflict>
    <text>The predicted gene At4g17780 has been split into 2 genes: At4g17780 and At4g17785.</text>
</comment>
<protein>
    <recommendedName>
        <fullName>Putative F-box protein At4g17780</fullName>
    </recommendedName>
</protein>
<name>FB236_ARATH</name>